<evidence type="ECO:0000255" key="1">
    <source>
        <dbReference type="HAMAP-Rule" id="MF_00195"/>
    </source>
</evidence>
<gene>
    <name evidence="1" type="primary">der</name>
    <name type="synonym">engA</name>
    <name type="ordered locus">AM1_5937</name>
</gene>
<sequence length="453" mass="50921">MGLPIVAIVGRPNVGKSTLVNRLTGMMDAIVHDSPGVTRDRTYRPALWNGRDFSLVDTGGLVFDDQTEFLPFIRQQVMIALAEATVVVMVVDGQAGPTPADHEIAHWLRQQDTPVLLAVNKCESPEQGITQAAQFWELSLDEPLPVSGIHGNGTGDLLDQVVEYFSETPESEDEPEIKVALVGRPNVGKSSLLNAFVGENRSIVSPISGTTRDTIDMVVRRGEQTYRFIDTAGIRRKKNVSYGPEFFGINRAFKAIRRSQVVLFVIDALDGVTEQDQKLAGRIIDDGRACVLVVNKWDAVTKDTYTINEFSKQIRSRLNFMEWAEMIFVSAQTGQRVEKILNLVDTAARQFEQRVTTSVINEVLEEAVSWHTPPTTRQGRQGKIYYGTQVSSQPPTIALFVNNPDHFKDNYRRYIERQFRENLDFTGTPIRLLWRGKKLRDVERNTANRATRA</sequence>
<comment type="function">
    <text evidence="1">GTPase that plays an essential role in the late steps of ribosome biogenesis.</text>
</comment>
<comment type="subunit">
    <text evidence="1">Associates with the 50S ribosomal subunit.</text>
</comment>
<comment type="similarity">
    <text evidence="1">Belongs to the TRAFAC class TrmE-Era-EngA-EngB-Septin-like GTPase superfamily. EngA (Der) GTPase family.</text>
</comment>
<proteinExistence type="inferred from homology"/>
<reference key="1">
    <citation type="journal article" date="2008" name="Proc. Natl. Acad. Sci. U.S.A.">
        <title>Niche adaptation and genome expansion in the chlorophyll d-producing cyanobacterium Acaryochloris marina.</title>
        <authorList>
            <person name="Swingley W.D."/>
            <person name="Chen M."/>
            <person name="Cheung P.C."/>
            <person name="Conrad A.L."/>
            <person name="Dejesa L.C."/>
            <person name="Hao J."/>
            <person name="Honchak B.M."/>
            <person name="Karbach L.E."/>
            <person name="Kurdoglu A."/>
            <person name="Lahiri S."/>
            <person name="Mastrian S.D."/>
            <person name="Miyashita H."/>
            <person name="Page L."/>
            <person name="Ramakrishna P."/>
            <person name="Satoh S."/>
            <person name="Sattley W.M."/>
            <person name="Shimada Y."/>
            <person name="Taylor H.L."/>
            <person name="Tomo T."/>
            <person name="Tsuchiya T."/>
            <person name="Wang Z.T."/>
            <person name="Raymond J."/>
            <person name="Mimuro M."/>
            <person name="Blankenship R.E."/>
            <person name="Touchman J.W."/>
        </authorList>
    </citation>
    <scope>NUCLEOTIDE SEQUENCE [LARGE SCALE GENOMIC DNA]</scope>
    <source>
        <strain>MBIC 11017</strain>
    </source>
</reference>
<organism>
    <name type="scientific">Acaryochloris marina (strain MBIC 11017)</name>
    <dbReference type="NCBI Taxonomy" id="329726"/>
    <lineage>
        <taxon>Bacteria</taxon>
        <taxon>Bacillati</taxon>
        <taxon>Cyanobacteriota</taxon>
        <taxon>Cyanophyceae</taxon>
        <taxon>Acaryochloridales</taxon>
        <taxon>Acaryochloridaceae</taxon>
        <taxon>Acaryochloris</taxon>
    </lineage>
</organism>
<keyword id="KW-0342">GTP-binding</keyword>
<keyword id="KW-0547">Nucleotide-binding</keyword>
<keyword id="KW-1185">Reference proteome</keyword>
<keyword id="KW-0677">Repeat</keyword>
<keyword id="KW-0690">Ribosome biogenesis</keyword>
<feature type="chain" id="PRO_1000077646" description="GTPase Der">
    <location>
        <begin position="1"/>
        <end position="453"/>
    </location>
</feature>
<feature type="domain" description="EngA-type G 1">
    <location>
        <begin position="4"/>
        <end position="169"/>
    </location>
</feature>
<feature type="domain" description="EngA-type G 2">
    <location>
        <begin position="177"/>
        <end position="352"/>
    </location>
</feature>
<feature type="domain" description="KH-like" evidence="1">
    <location>
        <begin position="353"/>
        <end position="438"/>
    </location>
</feature>
<feature type="binding site" evidence="1">
    <location>
        <begin position="10"/>
        <end position="17"/>
    </location>
    <ligand>
        <name>GTP</name>
        <dbReference type="ChEBI" id="CHEBI:37565"/>
        <label>1</label>
    </ligand>
</feature>
<feature type="binding site" evidence="1">
    <location>
        <begin position="57"/>
        <end position="61"/>
    </location>
    <ligand>
        <name>GTP</name>
        <dbReference type="ChEBI" id="CHEBI:37565"/>
        <label>1</label>
    </ligand>
</feature>
<feature type="binding site" evidence="1">
    <location>
        <begin position="120"/>
        <end position="123"/>
    </location>
    <ligand>
        <name>GTP</name>
        <dbReference type="ChEBI" id="CHEBI:37565"/>
        <label>1</label>
    </ligand>
</feature>
<feature type="binding site" evidence="1">
    <location>
        <begin position="183"/>
        <end position="190"/>
    </location>
    <ligand>
        <name>GTP</name>
        <dbReference type="ChEBI" id="CHEBI:37565"/>
        <label>2</label>
    </ligand>
</feature>
<feature type="binding site" evidence="1">
    <location>
        <begin position="230"/>
        <end position="234"/>
    </location>
    <ligand>
        <name>GTP</name>
        <dbReference type="ChEBI" id="CHEBI:37565"/>
        <label>2</label>
    </ligand>
</feature>
<feature type="binding site" evidence="1">
    <location>
        <begin position="295"/>
        <end position="298"/>
    </location>
    <ligand>
        <name>GTP</name>
        <dbReference type="ChEBI" id="CHEBI:37565"/>
        <label>2</label>
    </ligand>
</feature>
<name>DER_ACAM1</name>
<dbReference type="EMBL" id="CP000828">
    <property type="protein sequence ID" value="ABW30876.1"/>
    <property type="molecule type" value="Genomic_DNA"/>
</dbReference>
<dbReference type="RefSeq" id="WP_012166078.1">
    <property type="nucleotide sequence ID" value="NC_009925.1"/>
</dbReference>
<dbReference type="SMR" id="B0C1P2"/>
<dbReference type="STRING" id="329726.AM1_5937"/>
<dbReference type="KEGG" id="amr:AM1_5937"/>
<dbReference type="eggNOG" id="COG1160">
    <property type="taxonomic scope" value="Bacteria"/>
</dbReference>
<dbReference type="HOGENOM" id="CLU_016077_6_2_3"/>
<dbReference type="OrthoDB" id="9805918at2"/>
<dbReference type="Proteomes" id="UP000000268">
    <property type="component" value="Chromosome"/>
</dbReference>
<dbReference type="GO" id="GO:0016887">
    <property type="term" value="F:ATP hydrolysis activity"/>
    <property type="evidence" value="ECO:0007669"/>
    <property type="project" value="InterPro"/>
</dbReference>
<dbReference type="GO" id="GO:0005525">
    <property type="term" value="F:GTP binding"/>
    <property type="evidence" value="ECO:0007669"/>
    <property type="project" value="UniProtKB-UniRule"/>
</dbReference>
<dbReference type="GO" id="GO:0043022">
    <property type="term" value="F:ribosome binding"/>
    <property type="evidence" value="ECO:0007669"/>
    <property type="project" value="TreeGrafter"/>
</dbReference>
<dbReference type="GO" id="GO:0042254">
    <property type="term" value="P:ribosome biogenesis"/>
    <property type="evidence" value="ECO:0007669"/>
    <property type="project" value="UniProtKB-KW"/>
</dbReference>
<dbReference type="CDD" id="cd01894">
    <property type="entry name" value="EngA1"/>
    <property type="match status" value="1"/>
</dbReference>
<dbReference type="CDD" id="cd01895">
    <property type="entry name" value="EngA2"/>
    <property type="match status" value="1"/>
</dbReference>
<dbReference type="FunFam" id="3.30.300.20:FF:000004">
    <property type="entry name" value="GTPase Der"/>
    <property type="match status" value="1"/>
</dbReference>
<dbReference type="FunFam" id="3.40.50.300:FF:000040">
    <property type="entry name" value="GTPase Der"/>
    <property type="match status" value="1"/>
</dbReference>
<dbReference type="FunFam" id="3.40.50.300:FF:000057">
    <property type="entry name" value="GTPase Der"/>
    <property type="match status" value="1"/>
</dbReference>
<dbReference type="Gene3D" id="3.30.300.20">
    <property type="match status" value="1"/>
</dbReference>
<dbReference type="Gene3D" id="3.40.50.300">
    <property type="entry name" value="P-loop containing nucleotide triphosphate hydrolases"/>
    <property type="match status" value="2"/>
</dbReference>
<dbReference type="HAMAP" id="MF_00195">
    <property type="entry name" value="GTPase_Der"/>
    <property type="match status" value="1"/>
</dbReference>
<dbReference type="InterPro" id="IPR003593">
    <property type="entry name" value="AAA+_ATPase"/>
</dbReference>
<dbReference type="InterPro" id="IPR031166">
    <property type="entry name" value="G_ENGA"/>
</dbReference>
<dbReference type="InterPro" id="IPR006073">
    <property type="entry name" value="GTP-bd"/>
</dbReference>
<dbReference type="InterPro" id="IPR016484">
    <property type="entry name" value="GTPase_Der"/>
</dbReference>
<dbReference type="InterPro" id="IPR032859">
    <property type="entry name" value="KH_dom-like"/>
</dbReference>
<dbReference type="InterPro" id="IPR015946">
    <property type="entry name" value="KH_dom-like_a/b"/>
</dbReference>
<dbReference type="InterPro" id="IPR027417">
    <property type="entry name" value="P-loop_NTPase"/>
</dbReference>
<dbReference type="InterPro" id="IPR005225">
    <property type="entry name" value="Small_GTP-bd"/>
</dbReference>
<dbReference type="NCBIfam" id="TIGR03594">
    <property type="entry name" value="GTPase_EngA"/>
    <property type="match status" value="1"/>
</dbReference>
<dbReference type="NCBIfam" id="TIGR00231">
    <property type="entry name" value="small_GTP"/>
    <property type="match status" value="2"/>
</dbReference>
<dbReference type="PANTHER" id="PTHR43834">
    <property type="entry name" value="GTPASE DER"/>
    <property type="match status" value="1"/>
</dbReference>
<dbReference type="PANTHER" id="PTHR43834:SF6">
    <property type="entry name" value="GTPASE DER"/>
    <property type="match status" value="1"/>
</dbReference>
<dbReference type="Pfam" id="PF14714">
    <property type="entry name" value="KH_dom-like"/>
    <property type="match status" value="1"/>
</dbReference>
<dbReference type="Pfam" id="PF01926">
    <property type="entry name" value="MMR_HSR1"/>
    <property type="match status" value="2"/>
</dbReference>
<dbReference type="PIRSF" id="PIRSF006485">
    <property type="entry name" value="GTP-binding_EngA"/>
    <property type="match status" value="1"/>
</dbReference>
<dbReference type="PRINTS" id="PR00326">
    <property type="entry name" value="GTP1OBG"/>
</dbReference>
<dbReference type="SMART" id="SM00382">
    <property type="entry name" value="AAA"/>
    <property type="match status" value="2"/>
</dbReference>
<dbReference type="SUPFAM" id="SSF52540">
    <property type="entry name" value="P-loop containing nucleoside triphosphate hydrolases"/>
    <property type="match status" value="2"/>
</dbReference>
<dbReference type="PROSITE" id="PS51712">
    <property type="entry name" value="G_ENGA"/>
    <property type="match status" value="2"/>
</dbReference>
<protein>
    <recommendedName>
        <fullName evidence="1">GTPase Der</fullName>
    </recommendedName>
    <alternativeName>
        <fullName evidence="1">GTP-binding protein EngA</fullName>
    </alternativeName>
</protein>
<accession>B0C1P2</accession>